<feature type="initiator methionine" description="Removed" evidence="1">
    <location>
        <position position="1"/>
    </location>
</feature>
<feature type="chain" id="PRO_0000139824" description="Large ribosomal subunit protein eL43">
    <location>
        <begin position="2"/>
        <end position="92"/>
    </location>
</feature>
<feature type="zinc finger region" description="C4-type">
    <location>
        <begin position="39"/>
        <end position="60"/>
    </location>
</feature>
<accession>O61462</accession>
<sequence length="92" mass="10295">MAKRTKKVGIVGKYGTRYGASLRKTVKKMEITQHSKYTCQFCGKDAMKRQAVGIWGCKSCRKVVAGGAWVYSTMAAVTVRSAVRRLREMKES</sequence>
<reference key="1">
    <citation type="journal article" date="1999" name="Mol. Mar. Biol. Biotechnol.">
        <title>Ribosomal proteins S27E, P2, and L37A from marine invertebrates.</title>
        <authorList>
            <person name="Snyder M.J."/>
        </authorList>
    </citation>
    <scope>NUCLEOTIDE SEQUENCE [MRNA]</scope>
    <source>
        <tissue>Digestive gland</tissue>
    </source>
</reference>
<keyword id="KW-0479">Metal-binding</keyword>
<keyword id="KW-0687">Ribonucleoprotein</keyword>
<keyword id="KW-0689">Ribosomal protein</keyword>
<keyword id="KW-0862">Zinc</keyword>
<keyword id="KW-0863">Zinc-finger</keyword>
<evidence type="ECO:0000250" key="1"/>
<evidence type="ECO:0000305" key="2"/>
<gene>
    <name type="primary">RPL37A</name>
</gene>
<comment type="similarity">
    <text evidence="2">Belongs to the eukaryotic ribosomal protein eL43 family.</text>
</comment>
<proteinExistence type="inferred from homology"/>
<organism>
    <name type="scientific">Cryptochiton stelleri</name>
    <name type="common">Giant gumboot chiton</name>
    <dbReference type="NCBI Taxonomy" id="6655"/>
    <lineage>
        <taxon>Eukaryota</taxon>
        <taxon>Metazoa</taxon>
        <taxon>Spiralia</taxon>
        <taxon>Lophotrochozoa</taxon>
        <taxon>Mollusca</taxon>
        <taxon>Polyplacophora</taxon>
        <taxon>Neoloricata</taxon>
        <taxon>Chitonida</taxon>
        <taxon>Acanthochitonina</taxon>
        <taxon>Mopaliidae</taxon>
        <taxon>Cryptochiton</taxon>
    </lineage>
</organism>
<protein>
    <recommendedName>
        <fullName evidence="2">Large ribosomal subunit protein eL43</fullName>
    </recommendedName>
    <alternativeName>
        <fullName>60S ribosomal protein L37a</fullName>
    </alternativeName>
</protein>
<dbReference type="EMBL" id="AF040712">
    <property type="protein sequence ID" value="AAC15655.1"/>
    <property type="molecule type" value="mRNA"/>
</dbReference>
<dbReference type="SMR" id="O61462"/>
<dbReference type="GO" id="GO:1990904">
    <property type="term" value="C:ribonucleoprotein complex"/>
    <property type="evidence" value="ECO:0007669"/>
    <property type="project" value="UniProtKB-KW"/>
</dbReference>
<dbReference type="GO" id="GO:0005840">
    <property type="term" value="C:ribosome"/>
    <property type="evidence" value="ECO:0007669"/>
    <property type="project" value="UniProtKB-KW"/>
</dbReference>
<dbReference type="GO" id="GO:0003735">
    <property type="term" value="F:structural constituent of ribosome"/>
    <property type="evidence" value="ECO:0007669"/>
    <property type="project" value="InterPro"/>
</dbReference>
<dbReference type="GO" id="GO:0008270">
    <property type="term" value="F:zinc ion binding"/>
    <property type="evidence" value="ECO:0007669"/>
    <property type="project" value="UniProtKB-KW"/>
</dbReference>
<dbReference type="GO" id="GO:0006412">
    <property type="term" value="P:translation"/>
    <property type="evidence" value="ECO:0007669"/>
    <property type="project" value="InterPro"/>
</dbReference>
<dbReference type="FunFam" id="2.20.25.30:FF:000002">
    <property type="entry name" value="60S ribosomal protein L37a"/>
    <property type="match status" value="1"/>
</dbReference>
<dbReference type="Gene3D" id="2.20.25.30">
    <property type="match status" value="1"/>
</dbReference>
<dbReference type="HAMAP" id="MF_00327">
    <property type="entry name" value="Ribosomal_eL43"/>
    <property type="match status" value="1"/>
</dbReference>
<dbReference type="InterPro" id="IPR011331">
    <property type="entry name" value="Ribosomal_eL37/eL43"/>
</dbReference>
<dbReference type="InterPro" id="IPR002674">
    <property type="entry name" value="Ribosomal_eL43"/>
</dbReference>
<dbReference type="InterPro" id="IPR050522">
    <property type="entry name" value="Ribosomal_protein_eL43"/>
</dbReference>
<dbReference type="InterPro" id="IPR011332">
    <property type="entry name" value="Ribosomal_zn-bd"/>
</dbReference>
<dbReference type="NCBIfam" id="TIGR00280">
    <property type="entry name" value="eL43_euk_arch"/>
    <property type="match status" value="1"/>
</dbReference>
<dbReference type="NCBIfam" id="NF003058">
    <property type="entry name" value="PRK03976.1"/>
    <property type="match status" value="1"/>
</dbReference>
<dbReference type="PANTHER" id="PTHR48129">
    <property type="entry name" value="60S RIBOSOMAL PROTEIN L37A"/>
    <property type="match status" value="1"/>
</dbReference>
<dbReference type="PANTHER" id="PTHR48129:SF1">
    <property type="entry name" value="LARGE RIBOSOMAL SUBUNIT PROTEIN EL43"/>
    <property type="match status" value="1"/>
</dbReference>
<dbReference type="Pfam" id="PF01780">
    <property type="entry name" value="Ribosomal_L37ae"/>
    <property type="match status" value="1"/>
</dbReference>
<dbReference type="SUPFAM" id="SSF57829">
    <property type="entry name" value="Zn-binding ribosomal proteins"/>
    <property type="match status" value="1"/>
</dbReference>
<name>RL37A_CRYST</name>